<evidence type="ECO:0000250" key="1">
    <source>
        <dbReference type="UniProtKB" id="Q05127"/>
    </source>
</evidence>
<evidence type="ECO:0000250" key="2">
    <source>
        <dbReference type="UniProtKB" id="Q5XX07"/>
    </source>
</evidence>
<evidence type="ECO:0000250" key="3">
    <source>
        <dbReference type="UniProtKB" id="Q8JPY0"/>
    </source>
</evidence>
<evidence type="ECO:0000255" key="4"/>
<evidence type="ECO:0000255" key="5">
    <source>
        <dbReference type="PROSITE-ProRule" id="PRU01071"/>
    </source>
</evidence>
<evidence type="ECO:0000256" key="6">
    <source>
        <dbReference type="SAM" id="MobiDB-lite"/>
    </source>
</evidence>
<evidence type="ECO:0000269" key="7">
    <source>
    </source>
</evidence>
<evidence type="ECO:0007744" key="8">
    <source>
        <dbReference type="PDB" id="5BPV"/>
    </source>
</evidence>
<evidence type="ECO:0007829" key="9">
    <source>
        <dbReference type="PDB" id="5BPV"/>
    </source>
</evidence>
<keyword id="KW-0002">3D-structure</keyword>
<keyword id="KW-0175">Coiled coil</keyword>
<keyword id="KW-1035">Host cytoplasm</keyword>
<keyword id="KW-0945">Host-virus interaction</keyword>
<keyword id="KW-1224">Inhibition of host IKBKE by virus</keyword>
<keyword id="KW-1090">Inhibition of host innate immune response by virus</keyword>
<keyword id="KW-1093">Inhibition of host IRF7 by virus</keyword>
<keyword id="KW-1113">Inhibition of host RLR pathway by virus</keyword>
<keyword id="KW-1223">Inhibition of host TBK1 by virus</keyword>
<keyword id="KW-1225">Inhibition of host TLR pathway by virus</keyword>
<keyword id="KW-0922">Interferon antiviral system evasion</keyword>
<keyword id="KW-1017">Isopeptide bond</keyword>
<keyword id="KW-0597">Phosphoprotein</keyword>
<keyword id="KW-0694">RNA-binding</keyword>
<keyword id="KW-0941">Suppressor of RNA silencing</keyword>
<keyword id="KW-0804">Transcription</keyword>
<keyword id="KW-0832">Ubl conjugation</keyword>
<keyword id="KW-0899">Viral immunoevasion</keyword>
<keyword id="KW-0693">Viral RNA replication</keyword>
<keyword id="KW-0946">Virion</keyword>
<name>VP35_EBOZ5</name>
<sequence length="340" mass="37363">MTTRTKGRGHTAATTQNDRMPGPELSGWISEQLMTGRIPVSDIFCDIENNPGLCYASQMQQTKPNPKTRNSQTQTDPICNHSFEEVVQTLASLATVVQQQTIASESLEQRITSLENGLKPVYDMAKTISSLNRVCAEMVAKYDLLVMTTGRATATAAATEAYWAEHGQPPPGPSLYEESAIRGKIESRDETVPQSVREAFNNLDSTTSLTEENFGKPDISAKDLRNIMYDHLPGFGTAFHQLVQVICKLGKDSNSLDIIHAEFQASLAEGDSPQCALIQITKRVPIFQDAAPPVIHIRSRGDIPRACQKSLRPVPPSPKIDRGWVCVFQLQDGKTLGLKI</sequence>
<comment type="function">
    <text evidence="1 2 3 7">Plays an essential role in viral RNA synthesis and also a role in suppressing innate immune signaling. Acts as a polymerase cofactor in the RNA polymerase transcription and replication complexes (By similarity). Serves as nucleoprotein/NP monomer chaperone prior to the formation of the large oligomeric RNA-bound complexes (By similarity). Regulates RNA synthesis by modulating NP-RNA interactions and interacting with DYNLL1. VP35-NP interaction controls the switch between RNA-bound NP and free NP and thus the switch between genome replication and genome packaging into the nucleocapsid. Prevents establishment of cellular antiviral state, thereby suppressing host DC maturation. Acts by inhibiting host RIGI activation both by shielding dsRNA from detection and by preventing PRKRA binding to RIGI. Blocks virus-induced phosphorylation and activation of interferon regulatory factor 3/IRF3, a transcription factor critical for the induction of interferons alpha and beta. This blockage is produced through the interaction with and inhibition of host IKBKE and TBK1, producing a strong inhibition of the phosphorylation and activation of IRF3. Also inhibits the antiviral effect mediated by the host interferon-induced, double-stranded RNA-activated protein kinase EIF2AK2/PKR. Increases PIAS1-mediated SUMOylation of IRF7, thereby repressing interferon transcription (By similarity). Also acts as a suppressor of RNA silencing by interacting with host DICER1, TARBP2/TRBP and PRKRA/PACT (PubMed:21228243). As a dimer, binds and sequesters dsRNA contributing to the inhibition of interferon production (By similarity).</text>
</comment>
<comment type="subunit">
    <text evidence="1 3 7">Homodimer (By similarity). Homooligomer; via the coiled coil domain. Interacts with nucleoprotein NP and polymerase L; VP35 bridges L and NP and allows the formation of the polymerase complex. Also interacts with VP30; this interaction is regulated by VP30 phosphorylation. Interacts with host IKBKE and TBK1; the interactions lead to inhibition of cellular antiviral response by blocking necessary interactions of IKBKE and TBK1 with their substrate IRF3. Interacts with host DYNLL1; this interaction stabilizes VP35 N-terminal oligomerization domain, enhances viral RNA synthesis but does not participate in suppressing the host innate immune response. Interacts with host PRKRA; this interaction inhibits the interaction between RIGI and PRKRA. Interacts with dsRNA. Interacts with host TRIM6; this interaction plays an important role in promoting efficient viral replication. Interacts with host STAU1. Interacts with host IRF7, PIAS1 and UBE2I/UBC9; these interactions mediate the sumoylation of IRF7 and contribute to the inhibition of IFN-type I production (By similarity). Interacts with host DICER1; this interaction prevents TARBP2/TRBP binding to DICER1 and thus allows the virus to counteract host RNA silencing (PubMed:21228243). Interacts with host TARBP2/TRBP and PRKRA/PACT; these interactions prevent TARBP2 and PRKRA binding to DICER1 and thus allows the virus to counteract host RNA silencing (PubMed:21228243).</text>
</comment>
<comment type="subcellular location">
    <subcellularLocation>
        <location evidence="1">Virion</location>
    </subcellularLocation>
    <subcellularLocation>
        <location evidence="1">Host cytoplasm</location>
    </subcellularLocation>
</comment>
<comment type="PTM">
    <text evidence="1">Phosphorylated by host IKBKE. Phosphorylation contributes to efficient viral replication and transcription.</text>
</comment>
<comment type="PTM">
    <text evidence="1">Ubiquitinated by host TRIM6 to facilitate virus replication.</text>
</comment>
<comment type="similarity">
    <text evidence="5">Belongs to the filoviridae polymerase cofactor VP35 family.</text>
</comment>
<proteinExistence type="evidence at protein level"/>
<accession>Q6V1Q9</accession>
<gene>
    <name type="primary">VP35</name>
</gene>
<protein>
    <recommendedName>
        <fullName>Polymerase cofactor VP35</fullName>
    </recommendedName>
    <alternativeName>
        <fullName>Ebola VP35</fullName>
        <shortName>eVP35</shortName>
    </alternativeName>
</protein>
<organismHost>
    <name type="scientific">Epomops franqueti</name>
    <name type="common">Franquet's epauletted fruit bat</name>
    <name type="synonym">Epomophorus franqueti</name>
    <dbReference type="NCBI Taxonomy" id="77231"/>
</organismHost>
<organismHost>
    <name type="scientific">Homo sapiens</name>
    <name type="common">Human</name>
    <dbReference type="NCBI Taxonomy" id="9606"/>
</organismHost>
<organismHost>
    <name type="scientific">Myonycteris torquata</name>
    <name type="common">Little collared fruit bat</name>
    <dbReference type="NCBI Taxonomy" id="77243"/>
</organismHost>
<reference key="1">
    <citation type="submission" date="2003-07" db="EMBL/GenBank/DDBJ databases">
        <authorList>
            <person name="Chain P.S.G."/>
            <person name="Ichou M.A."/>
            <person name="Malfatti S.A."/>
            <person name="Hajjaj A."/>
            <person name="Vergez L.M."/>
            <person name="Paragas J."/>
            <person name="Do L.H."/>
            <person name="Jahrling P.B."/>
            <person name="Smith K.L."/>
            <person name="McCready P.M."/>
            <person name="Ibrahim M.S."/>
        </authorList>
    </citation>
    <scope>NUCLEOTIDE SEQUENCE [GENOMIC RNA]</scope>
</reference>
<reference key="2">
    <citation type="journal article" date="2011" name="J. Virol.">
        <title>Ebolavirus proteins suppress the effects of small interfering RNA by direct interaction with the mammalian RNA interference pathway.</title>
        <authorList>
            <person name="Fabozzi G."/>
            <person name="Nabel C.S."/>
            <person name="Dolan M.A."/>
            <person name="Sullivan N.J."/>
        </authorList>
    </citation>
    <scope>FUNCTION</scope>
    <scope>INTERACTION WITH HOST DICER1</scope>
    <scope>INTERACTION WITH HOST TARBP2/TRBP</scope>
    <scope>INTERACTION WITH HOST PRKRA/PACT</scope>
</reference>
<reference evidence="8" key="3">
    <citation type="submission" date="2015-05" db="PDB data bank">
        <title>Crystal Structure of Zaire ebolavirus VP35 RNA binding domain mutant I278A.</title>
        <authorList>
            <person name="Fadda V."/>
            <person name="Cannas V."/>
            <person name="Zinzula L."/>
            <person name="Distinto S."/>
            <person name="Daino G.L."/>
            <person name="Bianco G."/>
            <person name="Corona A."/>
            <person name="Esposito F."/>
            <person name="Alcaro S."/>
            <person name="Maccioni E."/>
            <person name="Tramontano E."/>
            <person name="Taylor G.L."/>
        </authorList>
    </citation>
    <scope>X-RAY CRYSTALLOGRAPHY (1.95 ANGSTROMS) OF 217-340</scope>
</reference>
<organism>
    <name type="scientific">Zaire ebolavirus (strain Kikwit-95)</name>
    <name type="common">ZEBOV</name>
    <name type="synonym">Zaire Ebola virus</name>
    <dbReference type="NCBI Taxonomy" id="128951"/>
    <lineage>
        <taxon>Viruses</taxon>
        <taxon>Riboviria</taxon>
        <taxon>Orthornavirae</taxon>
        <taxon>Negarnaviricota</taxon>
        <taxon>Haploviricotina</taxon>
        <taxon>Monjiviricetes</taxon>
        <taxon>Mononegavirales</taxon>
        <taxon>Filoviridae</taxon>
        <taxon>Orthoebolavirus</taxon>
        <taxon>Orthoebolavirus zairense</taxon>
        <taxon>Zaire ebolavirus</taxon>
    </lineage>
</organism>
<dbReference type="EMBL" id="AY354458">
    <property type="protein sequence ID" value="AAQ55046.1"/>
    <property type="molecule type" value="Genomic_RNA"/>
</dbReference>
<dbReference type="PDB" id="5BPV">
    <property type="method" value="X-ray"/>
    <property type="resolution" value="1.95 A"/>
    <property type="chains" value="A/B=217-340"/>
</dbReference>
<dbReference type="PDB" id="7D35">
    <property type="method" value="X-ray"/>
    <property type="resolution" value="2.40 A"/>
    <property type="chains" value="B=67-76"/>
</dbReference>
<dbReference type="PDBsum" id="5BPV"/>
<dbReference type="PDBsum" id="7D35"/>
<dbReference type="SMR" id="Q6V1Q9"/>
<dbReference type="Proteomes" id="UP000007208">
    <property type="component" value="Genome"/>
</dbReference>
<dbReference type="GO" id="GO:0030430">
    <property type="term" value="C:host cell cytoplasm"/>
    <property type="evidence" value="ECO:0007669"/>
    <property type="project" value="UniProtKB-SubCell"/>
</dbReference>
<dbReference type="GO" id="GO:0044423">
    <property type="term" value="C:virion component"/>
    <property type="evidence" value="ECO:0007669"/>
    <property type="project" value="UniProtKB-KW"/>
</dbReference>
<dbReference type="GO" id="GO:0003723">
    <property type="term" value="F:RNA binding"/>
    <property type="evidence" value="ECO:0007669"/>
    <property type="project" value="UniProtKB-KW"/>
</dbReference>
<dbReference type="GO" id="GO:0039724">
    <property type="term" value="P:symbiont-mediated suppression of host cytoplasmic pattern recognition receptor signaling pathway via inhibition of IKBKE activity"/>
    <property type="evidence" value="ECO:0007669"/>
    <property type="project" value="UniProtKB-KW"/>
</dbReference>
<dbReference type="GO" id="GO:0039557">
    <property type="term" value="P:symbiont-mediated suppression of host cytoplasmic pattern recognition receptor signaling pathway via inhibition of IRF7 activity"/>
    <property type="evidence" value="ECO:0007669"/>
    <property type="project" value="UniProtKB-KW"/>
</dbReference>
<dbReference type="GO" id="GO:0039723">
    <property type="term" value="P:symbiont-mediated suppression of host cytoplasmic pattern recognition receptor signaling pathway via inhibition of TBK1 activity"/>
    <property type="evidence" value="ECO:0007669"/>
    <property type="project" value="UniProtKB-KW"/>
</dbReference>
<dbReference type="GO" id="GO:0039722">
    <property type="term" value="P:symbiont-mediated suppression of host toll-like receptor signaling pathway"/>
    <property type="evidence" value="ECO:0007669"/>
    <property type="project" value="UniProtKB-KW"/>
</dbReference>
<dbReference type="CDD" id="cd21030">
    <property type="entry name" value="V35-RBD_P-protein-C_like"/>
    <property type="match status" value="1"/>
</dbReference>
<dbReference type="FunFam" id="1.10.8.950:FF:000001">
    <property type="entry name" value="Polymerase cofactor VP35"/>
    <property type="match status" value="1"/>
</dbReference>
<dbReference type="FunFam" id="2.10.10.70:FF:000001">
    <property type="entry name" value="Polymerase cofactor VP35"/>
    <property type="match status" value="1"/>
</dbReference>
<dbReference type="Gene3D" id="2.10.10.70">
    <property type="entry name" value="Filoviridae VP35, C-terminal inhibitory domain, beta-sheet subdomain"/>
    <property type="match status" value="1"/>
</dbReference>
<dbReference type="Gene3D" id="1.10.8.950">
    <property type="entry name" value="Filoviridae VP35, C-terminal inhibitory domain, helical subdomain"/>
    <property type="match status" value="1"/>
</dbReference>
<dbReference type="InterPro" id="IPR002953">
    <property type="entry name" value="Filo_VP35"/>
</dbReference>
<dbReference type="InterPro" id="IPR031163">
    <property type="entry name" value="VP35_IID"/>
</dbReference>
<dbReference type="InterPro" id="IPR043061">
    <property type="entry name" value="VP35_IID_b-sht"/>
</dbReference>
<dbReference type="InterPro" id="IPR043060">
    <property type="entry name" value="VP35_IID_hlx"/>
</dbReference>
<dbReference type="Pfam" id="PF02097">
    <property type="entry name" value="Filo_VP35"/>
    <property type="match status" value="1"/>
</dbReference>
<dbReference type="PIRSF" id="PIRSF018326">
    <property type="entry name" value="VP35_FiloV"/>
    <property type="match status" value="1"/>
</dbReference>
<dbReference type="PRINTS" id="PR01240">
    <property type="entry name" value="FILOVP35"/>
</dbReference>
<dbReference type="PROSITE" id="PS51735">
    <property type="entry name" value="VP35_IID"/>
    <property type="match status" value="1"/>
</dbReference>
<feature type="chain" id="PRO_0000245078" description="Polymerase cofactor VP35">
    <location>
        <begin position="1"/>
        <end position="340"/>
    </location>
</feature>
<feature type="domain" description="VP35 IID" evidence="5">
    <location>
        <begin position="215"/>
        <end position="340"/>
    </location>
</feature>
<feature type="region of interest" description="Disordered" evidence="6">
    <location>
        <begin position="1"/>
        <end position="24"/>
    </location>
</feature>
<feature type="coiled-coil region" evidence="4">
    <location>
        <begin position="96"/>
        <end position="116"/>
    </location>
</feature>
<feature type="modified residue" description="Phosphoserine" evidence="1">
    <location>
        <position position="187"/>
    </location>
</feature>
<feature type="modified residue" description="Phosphoserine" evidence="1">
    <location>
        <position position="205"/>
    </location>
</feature>
<feature type="modified residue" description="Phosphothreonine" evidence="1">
    <location>
        <position position="206"/>
    </location>
</feature>
<feature type="modified residue" description="Phosphoserine" evidence="1">
    <location>
        <position position="208"/>
    </location>
</feature>
<feature type="modified residue" description="Phosphothreonine" evidence="1">
    <location>
        <position position="210"/>
    </location>
</feature>
<feature type="modified residue" description="Phosphoserine" evidence="1">
    <location>
        <position position="317"/>
    </location>
</feature>
<feature type="cross-link" description="Glycyl lysine isopeptide (Lys-Gly) (interchain with G-Cter in ubiquitin)" evidence="1">
    <location>
        <position position="309"/>
    </location>
</feature>
<feature type="helix" evidence="9">
    <location>
        <begin position="221"/>
        <end position="231"/>
    </location>
</feature>
<feature type="strand" evidence="9">
    <location>
        <begin position="233"/>
        <end position="236"/>
    </location>
</feature>
<feature type="helix" evidence="9">
    <location>
        <begin position="238"/>
        <end position="252"/>
    </location>
</feature>
<feature type="helix" evidence="9">
    <location>
        <begin position="256"/>
        <end position="268"/>
    </location>
</feature>
<feature type="helix" evidence="9">
    <location>
        <begin position="273"/>
        <end position="283"/>
    </location>
</feature>
<feature type="helix" evidence="9">
    <location>
        <begin position="285"/>
        <end position="287"/>
    </location>
</feature>
<feature type="strand" evidence="9">
    <location>
        <begin position="294"/>
        <end position="296"/>
    </location>
</feature>
<feature type="helix" evidence="9">
    <location>
        <begin position="300"/>
        <end position="302"/>
    </location>
</feature>
<feature type="helix" evidence="9">
    <location>
        <begin position="305"/>
        <end position="310"/>
    </location>
</feature>
<feature type="helix" evidence="9">
    <location>
        <begin position="320"/>
        <end position="322"/>
    </location>
</feature>
<feature type="strand" evidence="9">
    <location>
        <begin position="324"/>
        <end position="329"/>
    </location>
</feature>
<feature type="strand" evidence="9">
    <location>
        <begin position="335"/>
        <end position="339"/>
    </location>
</feature>